<sequence>MKLYMSVDMEGISGLPDDTFVDSGKRNYERGRLIMTEEANYCIAEAFNSGCTEVLVNDSHSKMNNLMVEKLHPEADLISGDVKPFSMVEGLDDTFRGALFLGYHARASTPGVMSHSMIFGVRHFYINDRPVGELGLNAYVAGYYDVPVLMVAGDDRAAKEAEELIPNVTTAAVKQTISRSAVKCLSPAKAGRLLTEKTAFALQNKDKVKPLTPPDRPVLSIEFANYGQAEWANLMPGTEIKTGTTTVQFQAKDMLEAYQAMLVMTELAMRTSFC</sequence>
<gene>
    <name type="primary">dppA</name>
    <name type="synonym">dciAA</name>
    <name type="ordered locus">BSU12920</name>
</gene>
<comment type="function">
    <text>Hydrolyzes N-terminal residues in D-amino acid containing peptides. Among the tested substrates, the highest activities are with D-Ala-D-Ala and D-Ala-Gly-Gly. The physiological role is not clear.</text>
</comment>
<comment type="cofactor">
    <cofactor>
        <name>Zn(2+)</name>
        <dbReference type="ChEBI" id="CHEBI:29105"/>
    </cofactor>
    <text>Binds 2 Zn(2+) ions per subunit.</text>
</comment>
<comment type="biophysicochemical properties">
    <phDependence>
        <text>Optimum pH is 9-11.</text>
    </phDependence>
</comment>
<comment type="subunit">
    <text evidence="1">Homodecamer. A 20 Angstroms wide channel runs through the complex, giving access to a central chamber holding the active sites.</text>
</comment>
<comment type="developmental stage">
    <text>Expressed early during sporulation.</text>
</comment>
<comment type="induction">
    <text>Nutrient deficiency conditions, which also induce sporulation.</text>
</comment>
<comment type="similarity">
    <text evidence="2">Belongs to the peptidase M55 family.</text>
</comment>
<dbReference type="EC" id="3.4.11.-"/>
<dbReference type="EMBL" id="X56678">
    <property type="protein sequence ID" value="CAA40002.1"/>
    <property type="molecule type" value="Genomic_DNA"/>
</dbReference>
<dbReference type="EMBL" id="AJ002571">
    <property type="protein sequence ID" value="CAA05572.1"/>
    <property type="molecule type" value="Genomic_DNA"/>
</dbReference>
<dbReference type="EMBL" id="AL009126">
    <property type="protein sequence ID" value="CAB13149.2"/>
    <property type="molecule type" value="Genomic_DNA"/>
</dbReference>
<dbReference type="PIR" id="S16647">
    <property type="entry name" value="S16647"/>
</dbReference>
<dbReference type="RefSeq" id="NP_389175.2">
    <property type="nucleotide sequence ID" value="NC_000964.3"/>
</dbReference>
<dbReference type="RefSeq" id="WP_003245814.1">
    <property type="nucleotide sequence ID" value="NZ_OZ025638.1"/>
</dbReference>
<dbReference type="PDB" id="1HI9">
    <property type="method" value="X-ray"/>
    <property type="resolution" value="2.40 A"/>
    <property type="chains" value="A/B/C/D/E=1-274"/>
</dbReference>
<dbReference type="PDBsum" id="1HI9"/>
<dbReference type="SMR" id="P26902"/>
<dbReference type="FunCoup" id="P26902">
    <property type="interactions" value="46"/>
</dbReference>
<dbReference type="STRING" id="224308.BSU12920"/>
<dbReference type="MEROPS" id="M55.001"/>
<dbReference type="TCDB" id="3.A.1.5.2">
    <property type="family name" value="the atp-binding cassette (abc) superfamily"/>
</dbReference>
<dbReference type="PaxDb" id="224308-BSU12920"/>
<dbReference type="EnsemblBacteria" id="CAB13149">
    <property type="protein sequence ID" value="CAB13149"/>
    <property type="gene ID" value="BSU_12920"/>
</dbReference>
<dbReference type="GeneID" id="936727"/>
<dbReference type="KEGG" id="bsu:BSU12920"/>
<dbReference type="PATRIC" id="fig|224308.179.peg.1404"/>
<dbReference type="eggNOG" id="COG2362">
    <property type="taxonomic scope" value="Bacteria"/>
</dbReference>
<dbReference type="InParanoid" id="P26902"/>
<dbReference type="OrthoDB" id="9785420at2"/>
<dbReference type="PhylomeDB" id="P26902"/>
<dbReference type="BioCyc" id="BSUB:BSU12920-MONOMER"/>
<dbReference type="BRENDA" id="3.4.11.19">
    <property type="organism ID" value="658"/>
</dbReference>
<dbReference type="EvolutionaryTrace" id="P26902"/>
<dbReference type="Proteomes" id="UP000001570">
    <property type="component" value="Chromosome"/>
</dbReference>
<dbReference type="GO" id="GO:0004177">
    <property type="term" value="F:aminopeptidase activity"/>
    <property type="evidence" value="ECO:0007669"/>
    <property type="project" value="UniProtKB-KW"/>
</dbReference>
<dbReference type="GO" id="GO:0046872">
    <property type="term" value="F:metal ion binding"/>
    <property type="evidence" value="ECO:0007669"/>
    <property type="project" value="UniProtKB-KW"/>
</dbReference>
<dbReference type="GO" id="GO:0008237">
    <property type="term" value="F:metallopeptidase activity"/>
    <property type="evidence" value="ECO:0007669"/>
    <property type="project" value="UniProtKB-KW"/>
</dbReference>
<dbReference type="GO" id="GO:0006508">
    <property type="term" value="P:proteolysis"/>
    <property type="evidence" value="ECO:0007669"/>
    <property type="project" value="UniProtKB-KW"/>
</dbReference>
<dbReference type="GO" id="GO:0030435">
    <property type="term" value="P:sporulation resulting in formation of a cellular spore"/>
    <property type="evidence" value="ECO:0007669"/>
    <property type="project" value="UniProtKB-KW"/>
</dbReference>
<dbReference type="CDD" id="cd00281">
    <property type="entry name" value="DAP_dppA"/>
    <property type="match status" value="1"/>
</dbReference>
<dbReference type="Gene3D" id="3.30.1360.130">
    <property type="entry name" value="Dipeptide transport protein"/>
    <property type="match status" value="1"/>
</dbReference>
<dbReference type="Gene3D" id="3.40.50.10780">
    <property type="entry name" value="Dipeptide transport protein"/>
    <property type="match status" value="1"/>
</dbReference>
<dbReference type="InterPro" id="IPR033824">
    <property type="entry name" value="DppA"/>
</dbReference>
<dbReference type="InterPro" id="IPR027476">
    <property type="entry name" value="DppA_N"/>
</dbReference>
<dbReference type="InterPro" id="IPR007035">
    <property type="entry name" value="Peptidase_M55"/>
</dbReference>
<dbReference type="InterPro" id="IPR036177">
    <property type="entry name" value="Peptidase_M55_sf"/>
</dbReference>
<dbReference type="Pfam" id="PF04951">
    <property type="entry name" value="Peptidase_M55"/>
    <property type="match status" value="1"/>
</dbReference>
<dbReference type="PIRSF" id="PIRSF015853">
    <property type="entry name" value="Pep_DppA"/>
    <property type="match status" value="1"/>
</dbReference>
<dbReference type="SUPFAM" id="SSF63992">
    <property type="entry name" value="Dipeptide transport protein"/>
    <property type="match status" value="1"/>
</dbReference>
<evidence type="ECO:0000269" key="1">
    <source>
    </source>
</evidence>
<evidence type="ECO:0000305" key="2"/>
<evidence type="ECO:0007829" key="3">
    <source>
        <dbReference type="PDB" id="1HI9"/>
    </source>
</evidence>
<reference key="1">
    <citation type="journal article" date="1991" name="Mol. Microbiol.">
        <title>A Bacillus subtilis dipeptide transport system expressed early during sporulation.</title>
        <authorList>
            <person name="Mathiopoulos C."/>
            <person name="Mueller J.P."/>
            <person name="Slack F.J."/>
            <person name="Murphy C.G."/>
            <person name="Patankar S."/>
            <person name="Bukusoglu G."/>
            <person name="Sonenshein A.L."/>
        </authorList>
    </citation>
    <scope>NUCLEOTIDE SEQUENCE [GENOMIC DNA]</scope>
    <source>
        <strain>168</strain>
    </source>
</reference>
<reference key="2">
    <citation type="submission" date="1997-11" db="EMBL/GenBank/DDBJ databases">
        <title>Sequence of the Bacillus subtilis genome between xlyA and ykoR.</title>
        <authorList>
            <person name="Devine K.M."/>
        </authorList>
    </citation>
    <scope>NUCLEOTIDE SEQUENCE [GENOMIC DNA]</scope>
    <source>
        <strain>168</strain>
    </source>
</reference>
<reference key="3">
    <citation type="journal article" date="1997" name="Nature">
        <title>The complete genome sequence of the Gram-positive bacterium Bacillus subtilis.</title>
        <authorList>
            <person name="Kunst F."/>
            <person name="Ogasawara N."/>
            <person name="Moszer I."/>
            <person name="Albertini A.M."/>
            <person name="Alloni G."/>
            <person name="Azevedo V."/>
            <person name="Bertero M.G."/>
            <person name="Bessieres P."/>
            <person name="Bolotin A."/>
            <person name="Borchert S."/>
            <person name="Borriss R."/>
            <person name="Boursier L."/>
            <person name="Brans A."/>
            <person name="Braun M."/>
            <person name="Brignell S.C."/>
            <person name="Bron S."/>
            <person name="Brouillet S."/>
            <person name="Bruschi C.V."/>
            <person name="Caldwell B."/>
            <person name="Capuano V."/>
            <person name="Carter N.M."/>
            <person name="Choi S.-K."/>
            <person name="Codani J.-J."/>
            <person name="Connerton I.F."/>
            <person name="Cummings N.J."/>
            <person name="Daniel R.A."/>
            <person name="Denizot F."/>
            <person name="Devine K.M."/>
            <person name="Duesterhoeft A."/>
            <person name="Ehrlich S.D."/>
            <person name="Emmerson P.T."/>
            <person name="Entian K.-D."/>
            <person name="Errington J."/>
            <person name="Fabret C."/>
            <person name="Ferrari E."/>
            <person name="Foulger D."/>
            <person name="Fritz C."/>
            <person name="Fujita M."/>
            <person name="Fujita Y."/>
            <person name="Fuma S."/>
            <person name="Galizzi A."/>
            <person name="Galleron N."/>
            <person name="Ghim S.-Y."/>
            <person name="Glaser P."/>
            <person name="Goffeau A."/>
            <person name="Golightly E.J."/>
            <person name="Grandi G."/>
            <person name="Guiseppi G."/>
            <person name="Guy B.J."/>
            <person name="Haga K."/>
            <person name="Haiech J."/>
            <person name="Harwood C.R."/>
            <person name="Henaut A."/>
            <person name="Hilbert H."/>
            <person name="Holsappel S."/>
            <person name="Hosono S."/>
            <person name="Hullo M.-F."/>
            <person name="Itaya M."/>
            <person name="Jones L.-M."/>
            <person name="Joris B."/>
            <person name="Karamata D."/>
            <person name="Kasahara Y."/>
            <person name="Klaerr-Blanchard M."/>
            <person name="Klein C."/>
            <person name="Kobayashi Y."/>
            <person name="Koetter P."/>
            <person name="Koningstein G."/>
            <person name="Krogh S."/>
            <person name="Kumano M."/>
            <person name="Kurita K."/>
            <person name="Lapidus A."/>
            <person name="Lardinois S."/>
            <person name="Lauber J."/>
            <person name="Lazarevic V."/>
            <person name="Lee S.-M."/>
            <person name="Levine A."/>
            <person name="Liu H."/>
            <person name="Masuda S."/>
            <person name="Mauel C."/>
            <person name="Medigue C."/>
            <person name="Medina N."/>
            <person name="Mellado R.P."/>
            <person name="Mizuno M."/>
            <person name="Moestl D."/>
            <person name="Nakai S."/>
            <person name="Noback M."/>
            <person name="Noone D."/>
            <person name="O'Reilly M."/>
            <person name="Ogawa K."/>
            <person name="Ogiwara A."/>
            <person name="Oudega B."/>
            <person name="Park S.-H."/>
            <person name="Parro V."/>
            <person name="Pohl T.M."/>
            <person name="Portetelle D."/>
            <person name="Porwollik S."/>
            <person name="Prescott A.M."/>
            <person name="Presecan E."/>
            <person name="Pujic P."/>
            <person name="Purnelle B."/>
            <person name="Rapoport G."/>
            <person name="Rey M."/>
            <person name="Reynolds S."/>
            <person name="Rieger M."/>
            <person name="Rivolta C."/>
            <person name="Rocha E."/>
            <person name="Roche B."/>
            <person name="Rose M."/>
            <person name="Sadaie Y."/>
            <person name="Sato T."/>
            <person name="Scanlan E."/>
            <person name="Schleich S."/>
            <person name="Schroeter R."/>
            <person name="Scoffone F."/>
            <person name="Sekiguchi J."/>
            <person name="Sekowska A."/>
            <person name="Seror S.J."/>
            <person name="Serror P."/>
            <person name="Shin B.-S."/>
            <person name="Soldo B."/>
            <person name="Sorokin A."/>
            <person name="Tacconi E."/>
            <person name="Takagi T."/>
            <person name="Takahashi H."/>
            <person name="Takemaru K."/>
            <person name="Takeuchi M."/>
            <person name="Tamakoshi A."/>
            <person name="Tanaka T."/>
            <person name="Terpstra P."/>
            <person name="Tognoni A."/>
            <person name="Tosato V."/>
            <person name="Uchiyama S."/>
            <person name="Vandenbol M."/>
            <person name="Vannier F."/>
            <person name="Vassarotti A."/>
            <person name="Viari A."/>
            <person name="Wambutt R."/>
            <person name="Wedler E."/>
            <person name="Wedler H."/>
            <person name="Weitzenegger T."/>
            <person name="Winters P."/>
            <person name="Wipat A."/>
            <person name="Yamamoto H."/>
            <person name="Yamane K."/>
            <person name="Yasumoto K."/>
            <person name="Yata K."/>
            <person name="Yoshida K."/>
            <person name="Yoshikawa H.-F."/>
            <person name="Zumstein E."/>
            <person name="Yoshikawa H."/>
            <person name="Danchin A."/>
        </authorList>
    </citation>
    <scope>NUCLEOTIDE SEQUENCE [LARGE SCALE GENOMIC DNA]</scope>
    <source>
        <strain>168</strain>
    </source>
</reference>
<reference key="4">
    <citation type="journal article" date="2009" name="Microbiology">
        <title>From a consortium sequence to a unified sequence: the Bacillus subtilis 168 reference genome a decade later.</title>
        <authorList>
            <person name="Barbe V."/>
            <person name="Cruveiller S."/>
            <person name="Kunst F."/>
            <person name="Lenoble P."/>
            <person name="Meurice G."/>
            <person name="Sekowska A."/>
            <person name="Vallenet D."/>
            <person name="Wang T."/>
            <person name="Moszer I."/>
            <person name="Medigue C."/>
            <person name="Danchin A."/>
        </authorList>
    </citation>
    <scope>SEQUENCE REVISION TO 190</scope>
</reference>
<reference key="5">
    <citation type="journal article" date="2000" name="Mol. Microbiol.">
        <title>The dppA gene of Bacillus subtilis encodes a new D-aminopeptidase.</title>
        <authorList>
            <person name="Cheggour A."/>
            <person name="Fanuel L."/>
            <person name="Duez C."/>
            <person name="Joris B."/>
            <person name="Bouillenne F."/>
            <person name="Devreese B."/>
            <person name="Van Driessche G."/>
            <person name="Van Beeumen J."/>
            <person name="Frere J.-M."/>
            <person name="Goffin C."/>
        </authorList>
    </citation>
    <scope>PROTEIN SEQUENCE OF 1-14</scope>
    <scope>CHARACTERIZATION</scope>
</reference>
<reference key="6">
    <citation type="journal article" date="2001" name="Nat. Struct. Biol.">
        <title>Structure of the Bacillus subtilis D-aminopeptidase DppA reveals a novel self-compartmentalizing protease.</title>
        <authorList>
            <person name="Remaut H."/>
            <person name="Bompard-Gilles C."/>
            <person name="Goffin C."/>
            <person name="Frere J.-M."/>
            <person name="Van Beeumen J."/>
        </authorList>
    </citation>
    <scope>X-RAY CRYSTALLOGRAPHY (2.4 ANGSTROMS)</scope>
    <scope>SUBUNIT</scope>
</reference>
<organism>
    <name type="scientific">Bacillus subtilis (strain 168)</name>
    <dbReference type="NCBI Taxonomy" id="224308"/>
    <lineage>
        <taxon>Bacteria</taxon>
        <taxon>Bacillati</taxon>
        <taxon>Bacillota</taxon>
        <taxon>Bacilli</taxon>
        <taxon>Bacillales</taxon>
        <taxon>Bacillaceae</taxon>
        <taxon>Bacillus</taxon>
    </lineage>
</organism>
<protein>
    <recommendedName>
        <fullName>D-aminopeptidase</fullName>
        <ecNumber>3.4.11.-</ecNumber>
    </recommendedName>
</protein>
<accession>P26902</accession>
<accession>O34802</accession>
<proteinExistence type="evidence at protein level"/>
<feature type="chain" id="PRO_0000208269" description="D-aminopeptidase">
    <location>
        <begin position="1"/>
        <end position="274"/>
    </location>
</feature>
<feature type="active site" description="Nucleophile">
    <location>
        <position position="115"/>
    </location>
</feature>
<feature type="binding site">
    <location>
        <position position="8"/>
    </location>
    <ligand>
        <name>Zn(2+)</name>
        <dbReference type="ChEBI" id="CHEBI:29105"/>
        <label>1</label>
    </ligand>
</feature>
<feature type="binding site">
    <location>
        <position position="8"/>
    </location>
    <ligand>
        <name>Zn(2+)</name>
        <dbReference type="ChEBI" id="CHEBI:29105"/>
        <label>2</label>
    </ligand>
</feature>
<feature type="binding site">
    <location>
        <position position="10"/>
    </location>
    <ligand>
        <name>Zn(2+)</name>
        <dbReference type="ChEBI" id="CHEBI:29105"/>
        <label>1</label>
    </ligand>
</feature>
<feature type="binding site">
    <location>
        <position position="60"/>
    </location>
    <ligand>
        <name>Zn(2+)</name>
        <dbReference type="ChEBI" id="CHEBI:29105"/>
        <label>2</label>
    </ligand>
</feature>
<feature type="binding site">
    <location>
        <position position="104"/>
    </location>
    <ligand>
        <name>Zn(2+)</name>
        <dbReference type="ChEBI" id="CHEBI:29105"/>
        <label>2</label>
    </ligand>
</feature>
<feature type="binding site">
    <location>
        <position position="133"/>
    </location>
    <ligand>
        <name>Zn(2+)</name>
        <dbReference type="ChEBI" id="CHEBI:29105"/>
        <label>2</label>
    </ligand>
</feature>
<feature type="sequence conflict" description="In Ref. 2; CAA05572." evidence="2" ref="2">
    <original>A</original>
    <variation>R</variation>
    <location>
        <position position="190"/>
    </location>
</feature>
<feature type="sequence conflict" description="In Ref. 1; CAA40002." evidence="2" ref="1">
    <original>A</original>
    <variation>P</variation>
    <location>
        <position position="199"/>
    </location>
</feature>
<feature type="strand" evidence="3">
    <location>
        <begin position="2"/>
        <end position="7"/>
    </location>
</feature>
<feature type="helix" evidence="3">
    <location>
        <begin position="18"/>
        <end position="20"/>
    </location>
</feature>
<feature type="helix" evidence="3">
    <location>
        <begin position="28"/>
        <end position="48"/>
    </location>
</feature>
<feature type="strand" evidence="3">
    <location>
        <begin position="52"/>
        <end position="58"/>
    </location>
</feature>
<feature type="turn" evidence="3">
    <location>
        <begin position="68"/>
        <end position="70"/>
    </location>
</feature>
<feature type="strand" evidence="3">
    <location>
        <begin position="75"/>
        <end position="81"/>
    </location>
</feature>
<feature type="helix" evidence="3">
    <location>
        <begin position="86"/>
        <end position="88"/>
    </location>
</feature>
<feature type="strand" evidence="3">
    <location>
        <begin position="96"/>
        <end position="103"/>
    </location>
</feature>
<feature type="strand" evidence="3">
    <location>
        <begin position="109"/>
        <end position="111"/>
    </location>
</feature>
<feature type="strand" evidence="3">
    <location>
        <begin position="116"/>
        <end position="118"/>
    </location>
</feature>
<feature type="strand" evidence="3">
    <location>
        <begin position="121"/>
        <end position="126"/>
    </location>
</feature>
<feature type="strand" evidence="3">
    <location>
        <begin position="129"/>
        <end position="131"/>
    </location>
</feature>
<feature type="helix" evidence="3">
    <location>
        <begin position="133"/>
        <end position="143"/>
    </location>
</feature>
<feature type="strand" evidence="3">
    <location>
        <begin position="148"/>
        <end position="154"/>
    </location>
</feature>
<feature type="helix" evidence="3">
    <location>
        <begin position="155"/>
        <end position="162"/>
    </location>
</feature>
<feature type="strand" evidence="3">
    <location>
        <begin position="169"/>
        <end position="178"/>
    </location>
</feature>
<feature type="strand" evidence="3">
    <location>
        <begin position="181"/>
        <end position="184"/>
    </location>
</feature>
<feature type="helix" evidence="3">
    <location>
        <begin position="187"/>
        <end position="203"/>
    </location>
</feature>
<feature type="helix" evidence="3">
    <location>
        <begin position="205"/>
        <end position="207"/>
    </location>
</feature>
<feature type="strand" evidence="3">
    <location>
        <begin position="218"/>
        <end position="225"/>
    </location>
</feature>
<feature type="helix" evidence="3">
    <location>
        <begin position="226"/>
        <end position="232"/>
    </location>
</feature>
<feature type="strand" evidence="3">
    <location>
        <begin position="238"/>
        <end position="240"/>
    </location>
</feature>
<feature type="strand" evidence="3">
    <location>
        <begin position="244"/>
        <end position="250"/>
    </location>
</feature>
<feature type="helix" evidence="3">
    <location>
        <begin position="254"/>
        <end position="268"/>
    </location>
</feature>
<name>DPPA_BACSU</name>
<keyword id="KW-0002">3D-structure</keyword>
<keyword id="KW-0031">Aminopeptidase</keyword>
<keyword id="KW-0903">Direct protein sequencing</keyword>
<keyword id="KW-0378">Hydrolase</keyword>
<keyword id="KW-0479">Metal-binding</keyword>
<keyword id="KW-0482">Metalloprotease</keyword>
<keyword id="KW-0645">Protease</keyword>
<keyword id="KW-1185">Reference proteome</keyword>
<keyword id="KW-0749">Sporulation</keyword>
<keyword id="KW-0862">Zinc</keyword>